<proteinExistence type="inferred from homology"/>
<comment type="function">
    <text evidence="1">Structure-specific nuclease with 5'-flap endonuclease and 5'-3' exonuclease activities involved in DNA replication and repair. During DNA replication, cleaves the 5'-overhanging flap structure that is generated by displacement synthesis when DNA polymerase encounters the 5'-end of a downstream Okazaki fragment. Binds the unpaired 3'-DNA end and kinks the DNA to facilitate 5' cleavage specificity. Cleaves one nucleotide into the double-stranded DNA from the junction in flap DNA, leaving a nick for ligation. Also involved in the base excision repair (BER) pathway. Acts as a genome stabilization factor that prevents flaps from equilibrating into structures that lead to duplications and deletions. Also possesses 5'-3' exonuclease activity on nicked or gapped double-stranded DNA (By similarity).</text>
</comment>
<comment type="cofactor">
    <cofactor evidence="2">
        <name>Mg(2+)</name>
        <dbReference type="ChEBI" id="CHEBI:18420"/>
    </cofactor>
    <text evidence="2">Binds 2 magnesium ions per subunit. They probably participate in the reaction catalyzed by the enzyme. May bind an additional third magnesium ion after substrate binding.</text>
</comment>
<comment type="subunit">
    <text evidence="2">Interacts with PCNA. PCNA stimulates the nuclease activity without altering cleavage specificity.</text>
</comment>
<comment type="similarity">
    <text evidence="2">Belongs to the XPG/RAD2 endonuclease family. FEN1 subfamily.</text>
</comment>
<accession>Q0W6I0</accession>
<organism>
    <name type="scientific">Methanocella arvoryzae (strain DSM 22066 / NBRC 105507 / MRE50)</name>
    <dbReference type="NCBI Taxonomy" id="351160"/>
    <lineage>
        <taxon>Archaea</taxon>
        <taxon>Methanobacteriati</taxon>
        <taxon>Methanobacteriota</taxon>
        <taxon>Stenosarchaea group</taxon>
        <taxon>Methanomicrobia</taxon>
        <taxon>Methanocellales</taxon>
        <taxon>Methanocellaceae</taxon>
        <taxon>Methanocella</taxon>
    </lineage>
</organism>
<evidence type="ECO:0000250" key="1"/>
<evidence type="ECO:0000255" key="2">
    <source>
        <dbReference type="HAMAP-Rule" id="MF_00614"/>
    </source>
</evidence>
<reference key="1">
    <citation type="journal article" date="2006" name="Science">
        <title>Genome of rice cluster I archaea -- the key methane producers in the rice rhizosphere.</title>
        <authorList>
            <person name="Erkel C."/>
            <person name="Kube M."/>
            <person name="Reinhardt R."/>
            <person name="Liesack W."/>
        </authorList>
    </citation>
    <scope>NUCLEOTIDE SEQUENCE [LARGE SCALE GENOMIC DNA]</scope>
    <source>
        <strain>DSM 22066 / NBRC 105507 / MRE50</strain>
    </source>
</reference>
<sequence>MGVDLGGLVEPREIELKELNNRTVAVDAYNTLYQFLSIIRQQDGAPLADDRGNVTSHLSGIIYRVTNLVEEGMKPVFVFDGKPPSFKAETIKARAEVREAARQMYEAAKAAGSAEAYKYAQASTSINRQIVDDAKVLLGYMGIPFIVAPSEGEAQAAYMVSRGAADYVGSQDYDSLLFGAPRVVRNIAITGKRKVPRKNIYMDVKPEVIELQEVLATLGLTREELIDMAILVGTDYNPGIFKVGPKTALKLVKKHGDNMPAILDELGQTIENWEAIKEFFLHPTVTDDYQVKWGKPEPAKIKEFLCEEHSFSVDRVDKVLERLTTAVSETTKQKTLSSWF</sequence>
<dbReference type="EC" id="3.1.-.-" evidence="2"/>
<dbReference type="EMBL" id="AM114193">
    <property type="protein sequence ID" value="CAJ36013.1"/>
    <property type="molecule type" value="Genomic_DNA"/>
</dbReference>
<dbReference type="RefSeq" id="WP_012036494.1">
    <property type="nucleotide sequence ID" value="NC_009464.1"/>
</dbReference>
<dbReference type="SMR" id="Q0W6I0"/>
<dbReference type="STRING" id="351160.RCIX607"/>
<dbReference type="GeneID" id="5144142"/>
<dbReference type="KEGG" id="rci:RCIX607"/>
<dbReference type="PATRIC" id="fig|351160.9.peg.2223"/>
<dbReference type="eggNOG" id="arCOG04050">
    <property type="taxonomic scope" value="Archaea"/>
</dbReference>
<dbReference type="OrthoDB" id="9593at2157"/>
<dbReference type="Proteomes" id="UP000000663">
    <property type="component" value="Chromosome"/>
</dbReference>
<dbReference type="GO" id="GO:0008409">
    <property type="term" value="F:5'-3' exonuclease activity"/>
    <property type="evidence" value="ECO:0007669"/>
    <property type="project" value="UniProtKB-UniRule"/>
</dbReference>
<dbReference type="GO" id="GO:0017108">
    <property type="term" value="F:5'-flap endonuclease activity"/>
    <property type="evidence" value="ECO:0007669"/>
    <property type="project" value="UniProtKB-UniRule"/>
</dbReference>
<dbReference type="GO" id="GO:0003677">
    <property type="term" value="F:DNA binding"/>
    <property type="evidence" value="ECO:0007669"/>
    <property type="project" value="UniProtKB-UniRule"/>
</dbReference>
<dbReference type="GO" id="GO:0000287">
    <property type="term" value="F:magnesium ion binding"/>
    <property type="evidence" value="ECO:0007669"/>
    <property type="project" value="UniProtKB-UniRule"/>
</dbReference>
<dbReference type="GO" id="GO:0006281">
    <property type="term" value="P:DNA repair"/>
    <property type="evidence" value="ECO:0007669"/>
    <property type="project" value="UniProtKB-UniRule"/>
</dbReference>
<dbReference type="GO" id="GO:0043137">
    <property type="term" value="P:DNA replication, removal of RNA primer"/>
    <property type="evidence" value="ECO:0007669"/>
    <property type="project" value="UniProtKB-UniRule"/>
</dbReference>
<dbReference type="CDD" id="cd09903">
    <property type="entry name" value="H3TH_FEN1-Arc"/>
    <property type="match status" value="1"/>
</dbReference>
<dbReference type="CDD" id="cd09867">
    <property type="entry name" value="PIN_FEN1"/>
    <property type="match status" value="1"/>
</dbReference>
<dbReference type="FunFam" id="3.40.50.1010:FF:000016">
    <property type="entry name" value="Flap endonuclease 1"/>
    <property type="match status" value="1"/>
</dbReference>
<dbReference type="Gene3D" id="1.10.150.20">
    <property type="entry name" value="5' to 3' exonuclease, C-terminal subdomain"/>
    <property type="match status" value="1"/>
</dbReference>
<dbReference type="Gene3D" id="3.40.50.1010">
    <property type="entry name" value="5'-nuclease"/>
    <property type="match status" value="1"/>
</dbReference>
<dbReference type="HAMAP" id="MF_00614">
    <property type="entry name" value="Fen"/>
    <property type="match status" value="1"/>
</dbReference>
<dbReference type="InterPro" id="IPR036279">
    <property type="entry name" value="5-3_exonuclease_C_sf"/>
</dbReference>
<dbReference type="InterPro" id="IPR023426">
    <property type="entry name" value="Flap_endonuc"/>
</dbReference>
<dbReference type="InterPro" id="IPR019973">
    <property type="entry name" value="Flap_endonuc_arc"/>
</dbReference>
<dbReference type="InterPro" id="IPR008918">
    <property type="entry name" value="HhH2"/>
</dbReference>
<dbReference type="InterPro" id="IPR029060">
    <property type="entry name" value="PIN-like_dom_sf"/>
</dbReference>
<dbReference type="InterPro" id="IPR006086">
    <property type="entry name" value="XPG-I_dom"/>
</dbReference>
<dbReference type="InterPro" id="IPR006084">
    <property type="entry name" value="XPG/Rad2"/>
</dbReference>
<dbReference type="InterPro" id="IPR006085">
    <property type="entry name" value="XPG_DNA_repair_N"/>
</dbReference>
<dbReference type="NCBIfam" id="TIGR03674">
    <property type="entry name" value="fen_arch"/>
    <property type="match status" value="1"/>
</dbReference>
<dbReference type="PANTHER" id="PTHR11081:SF9">
    <property type="entry name" value="FLAP ENDONUCLEASE 1"/>
    <property type="match status" value="1"/>
</dbReference>
<dbReference type="PANTHER" id="PTHR11081">
    <property type="entry name" value="FLAP ENDONUCLEASE FAMILY MEMBER"/>
    <property type="match status" value="1"/>
</dbReference>
<dbReference type="Pfam" id="PF00867">
    <property type="entry name" value="XPG_I"/>
    <property type="match status" value="1"/>
</dbReference>
<dbReference type="Pfam" id="PF00752">
    <property type="entry name" value="XPG_N"/>
    <property type="match status" value="1"/>
</dbReference>
<dbReference type="PRINTS" id="PR00853">
    <property type="entry name" value="XPGRADSUPER"/>
</dbReference>
<dbReference type="SMART" id="SM00279">
    <property type="entry name" value="HhH2"/>
    <property type="match status" value="1"/>
</dbReference>
<dbReference type="SMART" id="SM00484">
    <property type="entry name" value="XPGI"/>
    <property type="match status" value="1"/>
</dbReference>
<dbReference type="SMART" id="SM00485">
    <property type="entry name" value="XPGN"/>
    <property type="match status" value="1"/>
</dbReference>
<dbReference type="SUPFAM" id="SSF47807">
    <property type="entry name" value="5' to 3' exonuclease, C-terminal subdomain"/>
    <property type="match status" value="1"/>
</dbReference>
<dbReference type="SUPFAM" id="SSF88723">
    <property type="entry name" value="PIN domain-like"/>
    <property type="match status" value="1"/>
</dbReference>
<gene>
    <name evidence="2" type="primary">fen</name>
    <name type="ordered locus">UNCMA_21720</name>
    <name type="ORF">RCIX607</name>
</gene>
<feature type="chain" id="PRO_1000061335" description="Flap endonuclease 1">
    <location>
        <begin position="1"/>
        <end position="340"/>
    </location>
</feature>
<feature type="region of interest" description="N-domain">
    <location>
        <begin position="1"/>
        <end position="98"/>
    </location>
</feature>
<feature type="region of interest" description="I-domain">
    <location>
        <begin position="115"/>
        <end position="256"/>
    </location>
</feature>
<feature type="region of interest" description="Interaction with PCNA" evidence="2">
    <location>
        <begin position="332"/>
        <end position="340"/>
    </location>
</feature>
<feature type="binding site" evidence="2">
    <location>
        <position position="27"/>
    </location>
    <ligand>
        <name>Mg(2+)</name>
        <dbReference type="ChEBI" id="CHEBI:18420"/>
        <label>1</label>
    </ligand>
</feature>
<feature type="binding site" evidence="2">
    <location>
        <position position="80"/>
    </location>
    <ligand>
        <name>Mg(2+)</name>
        <dbReference type="ChEBI" id="CHEBI:18420"/>
        <label>1</label>
    </ligand>
</feature>
<feature type="binding site" evidence="2">
    <location>
        <position position="151"/>
    </location>
    <ligand>
        <name>Mg(2+)</name>
        <dbReference type="ChEBI" id="CHEBI:18420"/>
        <label>1</label>
    </ligand>
</feature>
<feature type="binding site" evidence="2">
    <location>
        <position position="153"/>
    </location>
    <ligand>
        <name>Mg(2+)</name>
        <dbReference type="ChEBI" id="CHEBI:18420"/>
        <label>1</label>
    </ligand>
</feature>
<feature type="binding site" evidence="2">
    <location>
        <position position="172"/>
    </location>
    <ligand>
        <name>Mg(2+)</name>
        <dbReference type="ChEBI" id="CHEBI:18420"/>
        <label>2</label>
    </ligand>
</feature>
<feature type="binding site" evidence="2">
    <location>
        <position position="174"/>
    </location>
    <ligand>
        <name>Mg(2+)</name>
        <dbReference type="ChEBI" id="CHEBI:18420"/>
        <label>2</label>
    </ligand>
</feature>
<feature type="binding site" evidence="2">
    <location>
        <position position="235"/>
    </location>
    <ligand>
        <name>Mg(2+)</name>
        <dbReference type="ChEBI" id="CHEBI:18420"/>
        <label>2</label>
    </ligand>
</feature>
<name>FEN_METAR</name>
<protein>
    <recommendedName>
        <fullName evidence="2">Flap endonuclease 1</fullName>
        <shortName evidence="2">FEN-1</shortName>
        <ecNumber evidence="2">3.1.-.-</ecNumber>
    </recommendedName>
    <alternativeName>
        <fullName evidence="2">Flap structure-specific endonuclease 1</fullName>
    </alternativeName>
</protein>
<keyword id="KW-0227">DNA damage</keyword>
<keyword id="KW-0234">DNA repair</keyword>
<keyword id="KW-0235">DNA replication</keyword>
<keyword id="KW-0255">Endonuclease</keyword>
<keyword id="KW-0269">Exonuclease</keyword>
<keyword id="KW-0378">Hydrolase</keyword>
<keyword id="KW-0460">Magnesium</keyword>
<keyword id="KW-0479">Metal-binding</keyword>
<keyword id="KW-0540">Nuclease</keyword>
<keyword id="KW-1185">Reference proteome</keyword>